<sequence>MKLSPQQAPLYGDCVVTVLLAEEDKVEDDAIFYLIFSGSTLYHCTSTRKVSSDTLETIAPGHDCCETVKVLLCASKEGLPVFVVAEEDFHFVQDEAYDAAQFLATSAGNQQALNFTRFLDRSGPPSGDVNSLDEKVALAFRHLKLPAEWNVLGTDHTLHDGGPRETLMHFAVRLGLLRLTWFLLQKPGGRGALSIHNKEGATPVSLALERGYHKLHQLLTEENAGEPDSWSSLSYEIPYGDYSVRHHRELDIYTLTSESESHCEPHGDSCTGHISKLMNIQQQLMKTNLKQMDNLMPLMVTTQDSSCVPCVPEPSDHQQLPFEETKSTVCCQGSPGRKDASPCDLSSVVEEENLICSHKKNKDTGRPGEGVEPASAVDSRSASHQDSCLQSIPDCGVKGREGLPSCGNRNEVTGTQYSGVATCQQPLSSESSVPQDVLVTEPDARQHSSGRELPDSSSTDAGAPEKAGELEHSLLTPDATTQNSKPQVGESAKERLENSDISSAEATAVQALREPKQKADVTNHVFAARAAGADAPAEASPAWSPEEIPTGKPGMETQERGCEGGITSDQSSQVLPAAAAATENKVLDGLELETLPACPCETASSLDLTVSGPRPDGMPKQNSESSAQHAQSLNSQAPLCSIAGAGTPSAESACPQSTETSSGGSVIEHGSGEASLPESTAAQPEPQGLCTAPCPEDPQADTVTSDTAAHNQKSVGSCHLCALDAKNQEKDLRQDTPSVNTLEDVPHLPSVVPQSEEKLEPDQVSPRGSSFSLASSPESESVTKDDVLSLVSSQKEKGTATPQLHRAPACSDGPDGRDLNDTDKVGDGAASPPTPSAVELQTSMGNTSPVGVGEQEGSSLTATLEVLSDSLLQSVDKAALVSDSLLPEEGGSIVVPESSTALGQGGKDKATKCPSVKEDVHSSEMSREDQRTPPPGQEISRLCEKPMSALCAGEKALQHSNSPDTPSACLQTETKHNKEVAPQSSPLMKGGAVQNLVPPKTSLSADSEQKTSSTEQSGSSLLPGGASEALRCSQPSLSVSVESIQFQGKTSACKVSRNAMEDVTVADAFLATAEPTKEDALHHVKDISDLLNQEKKTTPGLPEALLDKGVTDLQEVITPEIEPLDCKREKLEGTDLSCPTSKSKETPNNEETTQPPARDLPTETGLSAINDNGPQADMKHVTQASVPGEESNVTTVLGMVSTQAADGPPGADSIEETATRIVEAVIKQIKASNTLRTQVEIQNPPLSSSEIKEIENTGSESARVFLPGEPLQMENTQKETTGHCSVETEAPEKIILAVHRPEPAPEMPDTKTGGEVDLLSKRSAASEEEAIGNGAATPKMKQAPGTQVINRESWCAIEPCPEAASLLASKQSSECRSFIDVGLGTECATKEGVLQRESGSDSDLFHSPSDEMDSIIFSKPEEEQLLCDTTGSSSSTDDTASLDRHSSHGSDVSLPQTSKLNRSRNHQSSNGFFSHGVDPESREGESEPAGSGEMEEEEMDSITEVPANRSFLRNSMRSLSPFRRHSWGPGKNAASDAEMNQRSSMQVLGHVVRRPPIHRRSMSWCPSGVQYSAALNADFNIRSFSLEGLTGGGGVGNKPSSSLEISSANSSELRNPFSGEEQRSSLMSLSEEHLEPDQRQHHRMFDQQTCYRSKQQGFNYCTSAISSPLTKSISLMTISHPGLDNSRPFHSASANLTESITEENCNFLPPSPSKKSFEEKSGTKVSRTFSYIRNKMSSSKKSKKEKDKKTLNGHTFSPIPIVGPINCSQCMKPFTNKDAYTCASCGAFVHKGCRENLASCAKVKMKQPKGSLQAHDTSSLPTVIMRNKSSQPKERPRSAVLLAEEAIAAPMFTNRRSQQSVSLSKSVSIQNITGVGNDENMSNTWKFLSHSTDSLNKICKVNESTESLTDEGVGTDMNEGQLMGDFESDSKQLEAESWSRTVDSKFLKQQKKDVVKRQEVIYELMQTELHHIRTLKIMSDVYSRGMMTDLLFEQQMVEKLFPCLDELISIHSQFFQRILERKKESLVDKSEKNFLIKRIGDVLVSQFSGENAERLKKTYGKFCGQHNQSVNYFKDLYTKDKRFQAFVKKKMSSSVVRRLGIPECILLVTQRITKYPVLFQRILQCTKDNEVEQEDLTQSLSLVKDVIGAVDSKVASYEKKVRLGEIYTKTDSKSIMRMKSGQMFAKEDLRRKKLVRDGSVFLKSATGRLKEKDQKYVFASLDHKSTVISLKKLIVREVAHEEKGLFLISMGVKDPEMVEVHASSREERNSWIQIIQDTINSLNRDEDEGIPSENEEEKRLLDTKARELKEQLQQKDQQILLLLEEKEMIFRDMTECSTPLPEDCSPTHSPRMLFRSNTEEALKGGPLMKSAISEVEILQGLVSGSLGGTLGQPISSPVEQEVMAGPISLPRRAETFGGFDCHQLNASKGGEKEEGDDGQDLRRTESDSGLKKGGNANLVFMLKRNSEQVVQSIVHLHELLTMLQGVVLQQDSYIEDQKLVLTEKVLTRSASRPSSLIEQEKQRSLEKQRQDLANLQKQQAQHLEEKRRREREWEARELELRDREAKLAEREETVRRRQQDLERDREELQQKKGTYQCDLERLRAAQKQLEREQEQLKRDAEQLSQRQMEQDLCQVSNKHGRLMRVPSFLPNSDEFSLLSTPSITKSGSLDSELSVSPKRNSISRTQKDKGPFHILSSASQTKVPEGQSQAPSSTSTSTRLFGLSKPKEKKEKKKKSKGSRTQPGDGPAPEVPAEGEEIFC</sequence>
<organism evidence="18">
    <name type="scientific">Rattus norvegicus</name>
    <name type="common">Rat</name>
    <dbReference type="NCBI Taxonomy" id="10116"/>
    <lineage>
        <taxon>Eukaryota</taxon>
        <taxon>Metazoa</taxon>
        <taxon>Chordata</taxon>
        <taxon>Craniata</taxon>
        <taxon>Vertebrata</taxon>
        <taxon>Euteleostomi</taxon>
        <taxon>Mammalia</taxon>
        <taxon>Eutheria</taxon>
        <taxon>Euarchontoglires</taxon>
        <taxon>Glires</taxon>
        <taxon>Rodentia</taxon>
        <taxon>Myomorpha</taxon>
        <taxon>Muroidea</taxon>
        <taxon>Muridae</taxon>
        <taxon>Murinae</taxon>
        <taxon>Rattus</taxon>
    </lineage>
</organism>
<reference key="1">
    <citation type="journal article" date="2004" name="Nature">
        <title>Genome sequence of the Brown Norway rat yields insights into mammalian evolution.</title>
        <authorList>
            <person name="Gibbs R.A."/>
            <person name="Weinstock G.M."/>
            <person name="Metzker M.L."/>
            <person name="Muzny D.M."/>
            <person name="Sodergren E.J."/>
            <person name="Scherer S."/>
            <person name="Scott G."/>
            <person name="Steffen D."/>
            <person name="Worley K.C."/>
            <person name="Burch P.E."/>
            <person name="Okwuonu G."/>
            <person name="Hines S."/>
            <person name="Lewis L."/>
            <person name="Deramo C."/>
            <person name="Delgado O."/>
            <person name="Dugan-Rocha S."/>
            <person name="Miner G."/>
            <person name="Morgan M."/>
            <person name="Hawes A."/>
            <person name="Gill R."/>
            <person name="Holt R.A."/>
            <person name="Adams M.D."/>
            <person name="Amanatides P.G."/>
            <person name="Baden-Tillson H."/>
            <person name="Barnstead M."/>
            <person name="Chin S."/>
            <person name="Evans C.A."/>
            <person name="Ferriera S."/>
            <person name="Fosler C."/>
            <person name="Glodek A."/>
            <person name="Gu Z."/>
            <person name="Jennings D."/>
            <person name="Kraft C.L."/>
            <person name="Nguyen T."/>
            <person name="Pfannkoch C.M."/>
            <person name="Sitter C."/>
            <person name="Sutton G.G."/>
            <person name="Venter J.C."/>
            <person name="Woodage T."/>
            <person name="Smith D."/>
            <person name="Lee H.-M."/>
            <person name="Gustafson E."/>
            <person name="Cahill P."/>
            <person name="Kana A."/>
            <person name="Doucette-Stamm L."/>
            <person name="Weinstock K."/>
            <person name="Fechtel K."/>
            <person name="Weiss R.B."/>
            <person name="Dunn D.M."/>
            <person name="Green E.D."/>
            <person name="Blakesley R.W."/>
            <person name="Bouffard G.G."/>
            <person name="De Jong P.J."/>
            <person name="Osoegawa K."/>
            <person name="Zhu B."/>
            <person name="Marra M."/>
            <person name="Schein J."/>
            <person name="Bosdet I."/>
            <person name="Fjell C."/>
            <person name="Jones S."/>
            <person name="Krzywinski M."/>
            <person name="Mathewson C."/>
            <person name="Siddiqui A."/>
            <person name="Wye N."/>
            <person name="McPherson J."/>
            <person name="Zhao S."/>
            <person name="Fraser C.M."/>
            <person name="Shetty J."/>
            <person name="Shatsman S."/>
            <person name="Geer K."/>
            <person name="Chen Y."/>
            <person name="Abramzon S."/>
            <person name="Nierman W.C."/>
            <person name="Havlak P.H."/>
            <person name="Chen R."/>
            <person name="Durbin K.J."/>
            <person name="Egan A."/>
            <person name="Ren Y."/>
            <person name="Song X.-Z."/>
            <person name="Li B."/>
            <person name="Liu Y."/>
            <person name="Qin X."/>
            <person name="Cawley S."/>
            <person name="Cooney A.J."/>
            <person name="D'Souza L.M."/>
            <person name="Martin K."/>
            <person name="Wu J.Q."/>
            <person name="Gonzalez-Garay M.L."/>
            <person name="Jackson A.R."/>
            <person name="Kalafus K.J."/>
            <person name="McLeod M.P."/>
            <person name="Milosavljevic A."/>
            <person name="Virk D."/>
            <person name="Volkov A."/>
            <person name="Wheeler D.A."/>
            <person name="Zhang Z."/>
            <person name="Bailey J.A."/>
            <person name="Eichler E.E."/>
            <person name="Tuzun E."/>
            <person name="Birney E."/>
            <person name="Mongin E."/>
            <person name="Ureta-Vidal A."/>
            <person name="Woodwark C."/>
            <person name="Zdobnov E."/>
            <person name="Bork P."/>
            <person name="Suyama M."/>
            <person name="Torrents D."/>
            <person name="Alexandersson M."/>
            <person name="Trask B.J."/>
            <person name="Young J.M."/>
            <person name="Huang H."/>
            <person name="Wang H."/>
            <person name="Xing H."/>
            <person name="Daniels S."/>
            <person name="Gietzen D."/>
            <person name="Schmidt J."/>
            <person name="Stevens K."/>
            <person name="Vitt U."/>
            <person name="Wingrove J."/>
            <person name="Camara F."/>
            <person name="Mar Alba M."/>
            <person name="Abril J.F."/>
            <person name="Guigo R."/>
            <person name="Smit A."/>
            <person name="Dubchak I."/>
            <person name="Rubin E.M."/>
            <person name="Couronne O."/>
            <person name="Poliakov A."/>
            <person name="Huebner N."/>
            <person name="Ganten D."/>
            <person name="Goesele C."/>
            <person name="Hummel O."/>
            <person name="Kreitler T."/>
            <person name="Lee Y.-A."/>
            <person name="Monti J."/>
            <person name="Schulz H."/>
            <person name="Zimdahl H."/>
            <person name="Himmelbauer H."/>
            <person name="Lehrach H."/>
            <person name="Jacob H.J."/>
            <person name="Bromberg S."/>
            <person name="Gullings-Handley J."/>
            <person name="Jensen-Seaman M.I."/>
            <person name="Kwitek A.E."/>
            <person name="Lazar J."/>
            <person name="Pasko D."/>
            <person name="Tonellato P.J."/>
            <person name="Twigger S."/>
            <person name="Ponting C.P."/>
            <person name="Duarte J.M."/>
            <person name="Rice S."/>
            <person name="Goodstadt L."/>
            <person name="Beatson S.A."/>
            <person name="Emes R.D."/>
            <person name="Winter E.E."/>
            <person name="Webber C."/>
            <person name="Brandt P."/>
            <person name="Nyakatura G."/>
            <person name="Adetobi M."/>
            <person name="Chiaromonte F."/>
            <person name="Elnitski L."/>
            <person name="Eswara P."/>
            <person name="Hardison R.C."/>
            <person name="Hou M."/>
            <person name="Kolbe D."/>
            <person name="Makova K."/>
            <person name="Miller W."/>
            <person name="Nekrutenko A."/>
            <person name="Riemer C."/>
            <person name="Schwartz S."/>
            <person name="Taylor J."/>
            <person name="Yang S."/>
            <person name="Zhang Y."/>
            <person name="Lindpaintner K."/>
            <person name="Andrews T.D."/>
            <person name="Caccamo M."/>
            <person name="Clamp M."/>
            <person name="Clarke L."/>
            <person name="Curwen V."/>
            <person name="Durbin R.M."/>
            <person name="Eyras E."/>
            <person name="Searle S.M."/>
            <person name="Cooper G.M."/>
            <person name="Batzoglou S."/>
            <person name="Brudno M."/>
            <person name="Sidow A."/>
            <person name="Stone E.A."/>
            <person name="Payseur B.A."/>
            <person name="Bourque G."/>
            <person name="Lopez-Otin C."/>
            <person name="Puente X.S."/>
            <person name="Chakrabarti K."/>
            <person name="Chatterji S."/>
            <person name="Dewey C."/>
            <person name="Pachter L."/>
            <person name="Bray N."/>
            <person name="Yap V.B."/>
            <person name="Caspi A."/>
            <person name="Tesler G."/>
            <person name="Pevzner P.A."/>
            <person name="Haussler D."/>
            <person name="Roskin K.M."/>
            <person name="Baertsch R."/>
            <person name="Clawson H."/>
            <person name="Furey T.S."/>
            <person name="Hinrichs A.S."/>
            <person name="Karolchik D."/>
            <person name="Kent W.J."/>
            <person name="Rosenbloom K.R."/>
            <person name="Trumbower H."/>
            <person name="Weirauch M."/>
            <person name="Cooper D.N."/>
            <person name="Stenson P.D."/>
            <person name="Ma B."/>
            <person name="Brent M."/>
            <person name="Arumugam M."/>
            <person name="Shteynberg D."/>
            <person name="Copley R.R."/>
            <person name="Taylor M.S."/>
            <person name="Riethman H."/>
            <person name="Mudunuri U."/>
            <person name="Peterson J."/>
            <person name="Guyer M."/>
            <person name="Felsenfeld A."/>
            <person name="Old S."/>
            <person name="Mockrin S."/>
            <person name="Collins F.S."/>
        </authorList>
    </citation>
    <scope>NUCLEOTIDE SEQUENCE [LARGE SCALE GENOMIC DNA]</scope>
    <source>
        <strain>Brown Norway</strain>
    </source>
</reference>
<reference key="2">
    <citation type="submission" date="2005-07" db="EMBL/GenBank/DDBJ databases">
        <authorList>
            <person name="Mural R.J."/>
            <person name="Adams M.D."/>
            <person name="Myers E.W."/>
            <person name="Smith H.O."/>
            <person name="Venter J.C."/>
        </authorList>
    </citation>
    <scope>NUCLEOTIDE SEQUENCE [LARGE SCALE GENOMIC DNA]</scope>
</reference>
<reference evidence="17" key="3">
    <citation type="journal article" date="2001" name="FEBS Lett.">
        <title>Ht31: the first protein kinase A anchoring protein to integrate protein kinase A and Rho signaling.</title>
        <authorList>
            <person name="Klussmann E."/>
            <person name="Edemir B."/>
            <person name="Pepperle B."/>
            <person name="Tamma G."/>
            <person name="Henn V."/>
            <person name="Klauschenz E."/>
            <person name="Hundsrucker C."/>
            <person name="Maric K."/>
            <person name="Rosenthal W."/>
        </authorList>
    </citation>
    <scope>NUCLEOTIDE SEQUENCE [MRNA] OF 1151-1748</scope>
    <scope>INTERACTION WITH RHOA AND PRKAR2A</scope>
    <source>
        <strain evidence="17">Sprague-Dawley</strain>
        <tissue evidence="17">Kidney</tissue>
    </source>
</reference>
<reference key="4">
    <citation type="journal article" date="2007" name="Proc. Natl. Acad. Sci. U.S.A.">
        <title>The A-kinase anchoring protein (AKAP)-Lbc-signaling complex mediates alpha1 adrenergic receptor-induced cardiomyocyte hypertrophy.</title>
        <authorList>
            <person name="Appert-Collin A."/>
            <person name="Cotecchia S."/>
            <person name="Nenniger-Tosato M."/>
            <person name="Pedrazzini T."/>
            <person name="Diviani D."/>
        </authorList>
    </citation>
    <scope>FUNCTION</scope>
    <scope>INDUCTION BY PHENYLEPHRINE</scope>
</reference>
<reference key="5">
    <citation type="journal article" date="2010" name="J. Biol. Chem.">
        <title>The Rho guanine nucleotide exchange factor AKAP13 (BRX) is essential for cardiac development in mice.</title>
        <authorList>
            <person name="Mayers C.M."/>
            <person name="Wadell J."/>
            <person name="McLean K."/>
            <person name="Venere M."/>
            <person name="Malik M."/>
            <person name="Shibata T."/>
            <person name="Driggers P.H."/>
            <person name="Kino T."/>
            <person name="Guo X.C."/>
            <person name="Koide H."/>
            <person name="Gorivodsky M."/>
            <person name="Grinberg A."/>
            <person name="Mukhopadhyay M."/>
            <person name="Abu-Asab M."/>
            <person name="Westphal H."/>
            <person name="Segars J.H."/>
        </authorList>
    </citation>
    <scope>FUNCTION</scope>
</reference>
<reference key="6">
    <citation type="journal article" date="2012" name="Nat. Commun.">
        <title>Quantitative maps of protein phosphorylation sites across 14 different rat organs and tissues.</title>
        <authorList>
            <person name="Lundby A."/>
            <person name="Secher A."/>
            <person name="Lage K."/>
            <person name="Nordsborg N.B."/>
            <person name="Dmytriyev A."/>
            <person name="Lundby C."/>
            <person name="Olsen J.V."/>
        </authorList>
    </citation>
    <scope>PHOSPHORYLATION [LARGE SCALE ANALYSIS] AT SER-1585; SER-1628; SER-1630; SER-1891; SER-1894; SER-1907; SER-2292; SER-2511 AND SER-2676</scope>
    <scope>IDENTIFICATION BY MASS SPECTROMETRY [LARGE SCALE ANALYSIS]</scope>
</reference>
<reference key="7">
    <citation type="journal article" date="2013" name="Mol. Cell. Biol.">
        <title>A-kinase-anchoring protein-Lbc anchors IkappaB kinase beta to support interleukin-6-mediated cardiomyocyte hypertrophy.</title>
        <authorList>
            <person name="del Vescovo C.D."/>
            <person name="Cotecchia S."/>
            <person name="Diviani D."/>
        </authorList>
    </citation>
    <scope>FUNCTION</scope>
    <scope>INTERACTION WITH IKBKB</scope>
</reference>
<reference key="8">
    <citation type="journal article" date="2013" name="Mol. Cell. Biol.">
        <title>A-kinase anchoring protein Lbc coordinates a p38 activating signaling complex controlling compensatory cardiac hypertrophy.</title>
        <authorList>
            <person name="Perez Lopez I."/>
            <person name="Cariolato L."/>
            <person name="Maric D."/>
            <person name="Gillet L."/>
            <person name="Abriel H."/>
            <person name="Diviani D."/>
        </authorList>
    </citation>
    <scope>FUNCTION</scope>
    <scope>IDENTIFICATION IN A COMPLEX WITH PKN1; MAPK14; ZAK AND MAP2K3</scope>
</reference>
<reference key="9">
    <citation type="journal article" date="2015" name="J. Bone Miner. Res.">
        <title>Mice deficient in AKAP13 (BRX) are osteoporotic and have impaired osteogenesis.</title>
        <authorList>
            <person name="Koide H."/>
            <person name="Holmbeck K."/>
            <person name="Lui J.C."/>
            <person name="Guo X.C."/>
            <person name="Driggers P."/>
            <person name="Chu T."/>
            <person name="Tatsuno I."/>
            <person name="Quaglieri C."/>
            <person name="Kino T."/>
            <person name="Baron J."/>
            <person name="Young M.F."/>
            <person name="Robey P.G."/>
            <person name="Segars J.H."/>
        </authorList>
    </citation>
    <scope>TISSUE SPECIFICITY</scope>
</reference>
<feature type="chain" id="PRO_0000436320" description="A-kinase anchor protein 13">
    <location>
        <begin position="1"/>
        <end position="2760"/>
    </location>
</feature>
<feature type="domain" description="DH" evidence="4">
    <location>
        <begin position="1956"/>
        <end position="2153"/>
    </location>
</feature>
<feature type="domain" description="PH" evidence="5">
    <location>
        <begin position="2176"/>
        <end position="2280"/>
    </location>
</feature>
<feature type="zinc finger region" description="Phorbol-ester/DAG-type" evidence="6">
    <location>
        <begin position="1753"/>
        <end position="1800"/>
    </location>
</feature>
<feature type="region of interest" description="Disordered" evidence="7">
    <location>
        <begin position="356"/>
        <end position="388"/>
    </location>
</feature>
<feature type="region of interest" description="Disordered" evidence="7">
    <location>
        <begin position="442"/>
        <end position="517"/>
    </location>
</feature>
<feature type="region of interest" description="Important for interaction with PRKAR2A" evidence="2">
    <location>
        <begin position="482"/>
        <end position="504"/>
    </location>
</feature>
<feature type="region of interest" description="Disordered" evidence="7">
    <location>
        <begin position="530"/>
        <end position="577"/>
    </location>
</feature>
<feature type="region of interest" description="Disordered" evidence="7">
    <location>
        <begin position="604"/>
        <end position="711"/>
    </location>
</feature>
<feature type="region of interest" description="Disordered" evidence="7">
    <location>
        <begin position="729"/>
        <end position="857"/>
    </location>
</feature>
<feature type="region of interest" description="Disordered" evidence="7">
    <location>
        <begin position="890"/>
        <end position="940"/>
    </location>
</feature>
<feature type="region of interest" description="Disordered" evidence="7">
    <location>
        <begin position="954"/>
        <end position="1029"/>
    </location>
</feature>
<feature type="region of interest" description="Disordered" evidence="7">
    <location>
        <begin position="1132"/>
        <end position="1162"/>
    </location>
</feature>
<feature type="region of interest" description="Important for interaction with PRKAR2A" evidence="8">
    <location>
        <begin position="1213"/>
        <end position="1228"/>
    </location>
</feature>
<feature type="region of interest" description="Disordered" evidence="7">
    <location>
        <begin position="1392"/>
        <end position="1411"/>
    </location>
</feature>
<feature type="region of interest" description="Disordered" evidence="7">
    <location>
        <begin position="1425"/>
        <end position="1508"/>
    </location>
</feature>
<feature type="region of interest" description="Disordered" evidence="7">
    <location>
        <begin position="1520"/>
        <end position="1539"/>
    </location>
</feature>
<feature type="region of interest" description="Important for interaction with MAP2K3" evidence="2">
    <location>
        <begin position="1546"/>
        <end position="1695"/>
    </location>
</feature>
<feature type="region of interest" description="Disordered" evidence="7">
    <location>
        <begin position="1592"/>
        <end position="1628"/>
    </location>
</feature>
<feature type="region of interest" description="Disordered" evidence="7">
    <location>
        <begin position="1733"/>
        <end position="1755"/>
    </location>
</feature>
<feature type="region of interest" description="Interaction with ESR1" evidence="2">
    <location>
        <begin position="1881"/>
        <end position="2760"/>
    </location>
</feature>
<feature type="region of interest" description="Disordered" evidence="7">
    <location>
        <begin position="2422"/>
        <end position="2450"/>
    </location>
</feature>
<feature type="region of interest" description="Disordered" evidence="7">
    <location>
        <begin position="2568"/>
        <end position="2588"/>
    </location>
</feature>
<feature type="region of interest" description="Disordered" evidence="7">
    <location>
        <begin position="2660"/>
        <end position="2760"/>
    </location>
</feature>
<feature type="coiled-coil region" evidence="3">
    <location>
        <begin position="2292"/>
        <end position="2329"/>
    </location>
</feature>
<feature type="coiled-coil region" evidence="3">
    <location>
        <begin position="2516"/>
        <end position="2632"/>
    </location>
</feature>
<feature type="compositionally biased region" description="Polar residues" evidence="7">
    <location>
        <begin position="378"/>
        <end position="388"/>
    </location>
</feature>
<feature type="compositionally biased region" description="Basic and acidic residues" evidence="7">
    <location>
        <begin position="442"/>
        <end position="454"/>
    </location>
</feature>
<feature type="compositionally biased region" description="Low complexity" evidence="7">
    <location>
        <begin position="530"/>
        <end position="547"/>
    </location>
</feature>
<feature type="compositionally biased region" description="Polar residues" evidence="7">
    <location>
        <begin position="620"/>
        <end position="638"/>
    </location>
</feature>
<feature type="compositionally biased region" description="Polar residues" evidence="7">
    <location>
        <begin position="654"/>
        <end position="664"/>
    </location>
</feature>
<feature type="compositionally biased region" description="Polar residues" evidence="7">
    <location>
        <begin position="701"/>
        <end position="711"/>
    </location>
</feature>
<feature type="compositionally biased region" description="Low complexity" evidence="7">
    <location>
        <begin position="769"/>
        <end position="780"/>
    </location>
</feature>
<feature type="compositionally biased region" description="Basic and acidic residues" evidence="7">
    <location>
        <begin position="814"/>
        <end position="826"/>
    </location>
</feature>
<feature type="compositionally biased region" description="Polar residues" evidence="7">
    <location>
        <begin position="839"/>
        <end position="849"/>
    </location>
</feature>
<feature type="compositionally biased region" description="Basic and acidic residues" evidence="7">
    <location>
        <begin position="906"/>
        <end position="931"/>
    </location>
</feature>
<feature type="compositionally biased region" description="Polar residues" evidence="7">
    <location>
        <begin position="958"/>
        <end position="972"/>
    </location>
</feature>
<feature type="compositionally biased region" description="Polar residues" evidence="7">
    <location>
        <begin position="1001"/>
        <end position="1020"/>
    </location>
</feature>
<feature type="compositionally biased region" description="Low complexity" evidence="7">
    <location>
        <begin position="1428"/>
        <end position="1439"/>
    </location>
</feature>
<feature type="compositionally biased region" description="Polar residues" evidence="7">
    <location>
        <begin position="1449"/>
        <end position="1472"/>
    </location>
</feature>
<feature type="compositionally biased region" description="Low complexity" evidence="7">
    <location>
        <begin position="1600"/>
        <end position="1611"/>
    </location>
</feature>
<feature type="compositionally biased region" description="Basic and acidic residues" evidence="7">
    <location>
        <begin position="2439"/>
        <end position="2450"/>
    </location>
</feature>
<feature type="compositionally biased region" description="Polar residues" evidence="7">
    <location>
        <begin position="2660"/>
        <end position="2684"/>
    </location>
</feature>
<feature type="compositionally biased region" description="Polar residues" evidence="7">
    <location>
        <begin position="2696"/>
        <end position="2711"/>
    </location>
</feature>
<feature type="compositionally biased region" description="Low complexity" evidence="7">
    <location>
        <begin position="2743"/>
        <end position="2752"/>
    </location>
</feature>
<feature type="modified residue" description="Phosphoserine" evidence="2">
    <location>
        <position position="776"/>
    </location>
</feature>
<feature type="modified residue" description="Phosphothreonine" evidence="2">
    <location>
        <position position="801"/>
    </location>
</feature>
<feature type="modified residue" description="Phosphothreonine" evidence="1">
    <location>
        <position position="932"/>
    </location>
</feature>
<feature type="modified residue" description="Phosphoserine" evidence="2">
    <location>
        <position position="962"/>
    </location>
</feature>
<feature type="modified residue" description="Phosphoserine" evidence="2">
    <location>
        <position position="1450"/>
    </location>
</feature>
<feature type="modified residue" description="Phosphoserine" evidence="2">
    <location>
        <position position="1468"/>
    </location>
</feature>
<feature type="modified residue" description="Phosphoserine" evidence="2">
    <location>
        <position position="1501"/>
    </location>
</feature>
<feature type="modified residue" description="Phosphoserine" evidence="2">
    <location>
        <position position="1526"/>
    </location>
</feature>
<feature type="modified residue" description="Phosphoserine" evidence="20">
    <location>
        <position position="1585"/>
    </location>
</feature>
<feature type="modified residue" description="Phosphoserine" evidence="2">
    <location>
        <position position="1625"/>
    </location>
</feature>
<feature type="modified residue" description="Phosphoserine" evidence="20">
    <location>
        <position position="1628"/>
    </location>
</feature>
<feature type="modified residue" description="Phosphoserine" evidence="20">
    <location>
        <position position="1630"/>
    </location>
</feature>
<feature type="modified residue" description="N6-methyllysine" evidence="2">
    <location>
        <position position="1654"/>
    </location>
</feature>
<feature type="modified residue" description="Phosphoserine" evidence="2">
    <location>
        <position position="1838"/>
    </location>
</feature>
<feature type="modified residue" description="Phosphoserine" evidence="2">
    <location>
        <position position="1857"/>
    </location>
</feature>
<feature type="modified residue" description="Phosphoserine" evidence="20">
    <location>
        <position position="1891"/>
    </location>
</feature>
<feature type="modified residue" description="Phosphothreonine" evidence="2">
    <location>
        <position position="1892"/>
    </location>
</feature>
<feature type="modified residue" description="Phosphoserine" evidence="20">
    <location>
        <position position="1894"/>
    </location>
</feature>
<feature type="modified residue" description="Phosphoserine" evidence="20">
    <location>
        <position position="1907"/>
    </location>
</feature>
<feature type="modified residue" description="Phosphoserine" evidence="20">
    <location>
        <position position="2292"/>
    </location>
</feature>
<feature type="modified residue" description="Phosphoserine" evidence="2">
    <location>
        <position position="2345"/>
    </location>
</feature>
<feature type="modified residue" description="Phosphothreonine" evidence="2">
    <location>
        <position position="2415"/>
    </location>
</feature>
<feature type="modified residue" description="Phosphoserine" evidence="20">
    <location>
        <position position="2511"/>
    </location>
</feature>
<feature type="modified residue" description="Phosphoserine" evidence="1">
    <location>
        <position position="2514"/>
    </location>
</feature>
<feature type="modified residue" description="Phosphoserine" evidence="20">
    <location>
        <position position="2676"/>
    </location>
</feature>
<feature type="sequence conflict" description="In Ref. 3; AAL40924." evidence="16" ref="3">
    <original>V</original>
    <variation>A</variation>
    <location>
        <position position="1348"/>
    </location>
</feature>
<feature type="sequence conflict" description="In Ref. 3; AAL40924." evidence="16" ref="3">
    <location>
        <begin position="1542"/>
        <end position="1559"/>
    </location>
</feature>
<feature type="sequence conflict" description="In Ref. 3; AAL40924." evidence="16" ref="3">
    <original>EKD</original>
    <variation>KKK</variation>
    <location>
        <begin position="1745"/>
        <end position="1747"/>
    </location>
</feature>
<comment type="function">
    <text evidence="1 2 9 10 11">Scaffold protein that plays an important role in assembling signaling complexes downstream of several types of G protein-coupled receptors. Activates RHOA in response to signaling via G protein-coupled receptors via its function as Rho guanine nucleotide exchange factor (PubMed:17537920). May also activate other Rho family members. Part of a kinase signaling complex that links ADRA1A and ADRA1B adrenergic receptor signaling to the activation of downstream p38 MAP kinases, such as MAPK11 and MAPK14 (PubMed:17537920, PubMed:23716597). Part of a signaling complex that links ADRA1B signaling to the activation of RHOA and IKBKB/IKKB, leading to increased NF-kappa-B transcriptional activity (PubMed:23090968). Part of a RHOA-dependent signaling cascade that mediates responses to lysophosphatidic acid (LPA), a signaling molecule that activates G-protein coupled receptors and potentiates transcriptional activation of the glucocorticoid receptor NR3C1 (By similarity). Part of a signaling cascade that stimulates MEF2C-dependent gene expression in response to lysophosphatidic acid (LPA) (PubMed:20139090). Part of a signaling pathway that activates MAPK11 and/or MAPK14 and leads to increased transcription activation of the estrogen receptors ESR1 and ESR2 (By similarity). Part of a signaling cascade that links cAMP and EGFR signaling to BRAF signaling and to PKA-mediated phosphorylation of KSR1, leading to the activation of downstream MAP kinases, such as MAPK1 or MAPK3 (By similarity). Functions as a scaffold protein that anchors cAMP-dependent protein kinase (PKA) and PRKD1. This promotes activation of PRKD1, leading to increased phosphorylation of HDAC5 and ultimately cardiomyocyte hypertrophy (By similarity). Has no guanine nucleotide exchange activity on CDC42, Ras or Rac (By similarity). Required for normal embryonic heart development, and in particular for normal sarcomere formation in the developing cardiomyocytes (By similarity). Plays a role in cardiomyocyte growth and cardiac hypertrophy in response to activation of the beta-adrenergic receptor by phenylephrine or isoproterenol (PubMed:17537920). Required for normal adaptive cardiac hypertrophy in response to pressure overload (By similarity). Plays a role in osteogenesis (By similarity).</text>
</comment>
<comment type="subunit">
    <text evidence="1 2 8 11 12">Interacts with the cAMP-dependent protein kinase (PKA) holoenzyme and with the regulatory subunit PRKAR2A (PubMed:11696353). Interacts with RHOA (PubMed:11696353). Also interacts with RHOB and RHOC. Identified in a ternary complex with RHOA and PRKAR2A. Identified in a complex with NR3C1 and RHOA. Interacts with BRAF and KSR1. Identified in a complex with BRAF and KSR1 (By similarity). Component of a signaling complex containing at least AKAP13, PKN1, MAPK14, ZAK and MAP2K3 (PubMed:23716597). Within this complex, AKAP13 interacts directly with PKN1, which in turn recruits MAPK14, MAP2K3 and ZAK (By similarity). Interacts (phosphorylated form) with YWHAB and YWHAZ. Interaction with YWHAB inhibits activation of RHOA, interferes with PKN1 binding and activation of MAP kinases. Interacts with GNA12. Interacts with IKBKB (PubMed:23090968). Interacts with ESR1, THRA, PPARA and NME2 (By similarity). Interacts (via the C-terminal domain after the PH domain) with MEF2C and RXRB. Interacts (via the C-terminal domain after the PH domain) with PRKD1 (By similarity).</text>
</comment>
<comment type="subcellular location">
    <subcellularLocation>
        <location evidence="2">Cytoplasm</location>
        <location evidence="2">Cytosol</location>
    </subcellularLocation>
    <subcellularLocation>
        <location evidence="2">Cytoplasm</location>
    </subcellularLocation>
    <subcellularLocation>
        <location evidence="2">Cytoplasm</location>
        <location evidence="2">Cell cortex</location>
    </subcellularLocation>
    <subcellularLocation>
        <location evidence="2">Nucleus</location>
    </subcellularLocation>
    <subcellularLocation>
        <location evidence="2">Membrane</location>
        <topology evidence="2">Peripheral membrane protein</topology>
    </subcellularLocation>
    <text evidence="2">Colocalizes with the actin cytoskeleton at the cell cortex.</text>
</comment>
<comment type="tissue specificity">
    <text evidence="13">Detected in bone osteoblasts (at protein level).</text>
</comment>
<comment type="induction">
    <text evidence="9">Up-regulated in cardiomyocytes in response to phenylephrine (in vitro).</text>
</comment>
<comment type="domain">
    <text evidence="2">The DH domain is sufficient for interaction with RHOA, and for guanine nucleotide exchange (GEF) activity with RHOA. Forms that lack C-terminal regulatory domains have transforming activity and function as oncogenes.</text>
</comment>
<comment type="domain">
    <text evidence="2">The PH domain does not play a role in lipid-binding. Instead, it inhibits the guanine nucleotide exchange (GEF) activity of the isolated DH domain (in vitro).</text>
</comment>
<comment type="domain">
    <text evidence="1">The C-terminal domain after the PH domain is involved in protein-protein interactions that are required for normal, compensatory cardiac hypertrophy in response to pressure overload.</text>
</comment>
<comment type="sequence caution" evidence="16">
    <conflict type="erroneous initiation">
        <sequence resource="EMBL-CDS" id="AAL40924"/>
    </conflict>
    <text>Extended N-terminus.</text>
</comment>
<dbReference type="EMBL" id="AABR07004317">
    <property type="status" value="NOT_ANNOTATED_CDS"/>
    <property type="molecule type" value="Genomic_DNA"/>
</dbReference>
<dbReference type="EMBL" id="AABR07004318">
    <property type="status" value="NOT_ANNOTATED_CDS"/>
    <property type="molecule type" value="Genomic_DNA"/>
</dbReference>
<dbReference type="EMBL" id="AABR07004319">
    <property type="status" value="NOT_ANNOTATED_CDS"/>
    <property type="molecule type" value="Genomic_DNA"/>
</dbReference>
<dbReference type="EMBL" id="CH473980">
    <property type="protein sequence ID" value="EDM08537.1"/>
    <property type="molecule type" value="Genomic_DNA"/>
</dbReference>
<dbReference type="EMBL" id="AF387102">
    <property type="protein sequence ID" value="AAL40924.1"/>
    <property type="status" value="ALT_INIT"/>
    <property type="molecule type" value="mRNA"/>
</dbReference>
<dbReference type="RefSeq" id="NP_001099741.2">
    <property type="nucleotide sequence ID" value="NM_001106271.3"/>
</dbReference>
<dbReference type="SMR" id="F1M3G7"/>
<dbReference type="FunCoup" id="F1M3G7">
    <property type="interactions" value="1025"/>
</dbReference>
<dbReference type="STRING" id="10116.ENSRNOP00000014802"/>
<dbReference type="GlyGen" id="F1M3G7">
    <property type="glycosylation" value="1 site"/>
</dbReference>
<dbReference type="iPTMnet" id="F1M3G7"/>
<dbReference type="PhosphoSitePlus" id="F1M3G7"/>
<dbReference type="jPOST" id="F1M3G7"/>
<dbReference type="PaxDb" id="10116-ENSRNOP00000014802"/>
<dbReference type="PeptideAtlas" id="F1M3G7"/>
<dbReference type="GeneID" id="293024"/>
<dbReference type="KEGG" id="rno:293024"/>
<dbReference type="UCSC" id="RGD:727893">
    <property type="organism name" value="rat"/>
</dbReference>
<dbReference type="AGR" id="RGD:727893"/>
<dbReference type="CTD" id="11214"/>
<dbReference type="RGD" id="727893">
    <property type="gene designation" value="Akap13"/>
</dbReference>
<dbReference type="VEuPathDB" id="HostDB:ENSRNOG00000010964"/>
<dbReference type="eggNOG" id="KOG3520">
    <property type="taxonomic scope" value="Eukaryota"/>
</dbReference>
<dbReference type="HOGENOM" id="CLU_000597_0_0_1"/>
<dbReference type="InParanoid" id="F1M3G7"/>
<dbReference type="TreeFam" id="TF325887"/>
<dbReference type="Reactome" id="R-RNO-193648">
    <property type="pathway name" value="NRAGE signals death through JNK"/>
</dbReference>
<dbReference type="Reactome" id="R-RNO-416482">
    <property type="pathway name" value="G alpha (12/13) signalling events"/>
</dbReference>
<dbReference type="Reactome" id="R-RNO-8980692">
    <property type="pathway name" value="RHOA GTPase cycle"/>
</dbReference>
<dbReference type="Reactome" id="R-RNO-9013026">
    <property type="pathway name" value="RHOB GTPase cycle"/>
</dbReference>
<dbReference type="PRO" id="PR:F1M3G7"/>
<dbReference type="Proteomes" id="UP000002494">
    <property type="component" value="Chromosome 1"/>
</dbReference>
<dbReference type="Proteomes" id="UP000234681">
    <property type="component" value="Chromosome 1"/>
</dbReference>
<dbReference type="Bgee" id="ENSRNOG00000010964">
    <property type="expression patterns" value="Expressed in lung and 19 other cell types or tissues"/>
</dbReference>
<dbReference type="GO" id="GO:0015629">
    <property type="term" value="C:actin cytoskeleton"/>
    <property type="evidence" value="ECO:0000266"/>
    <property type="project" value="RGD"/>
</dbReference>
<dbReference type="GO" id="GO:0005884">
    <property type="term" value="C:actin filament"/>
    <property type="evidence" value="ECO:0000266"/>
    <property type="project" value="RGD"/>
</dbReference>
<dbReference type="GO" id="GO:0005938">
    <property type="term" value="C:cell cortex"/>
    <property type="evidence" value="ECO:0000250"/>
    <property type="project" value="UniProtKB"/>
</dbReference>
<dbReference type="GO" id="GO:0030864">
    <property type="term" value="C:cortical actin cytoskeleton"/>
    <property type="evidence" value="ECO:0000266"/>
    <property type="project" value="RGD"/>
</dbReference>
<dbReference type="GO" id="GO:0005829">
    <property type="term" value="C:cytosol"/>
    <property type="evidence" value="ECO:0000250"/>
    <property type="project" value="UniProtKB"/>
</dbReference>
<dbReference type="GO" id="GO:0016020">
    <property type="term" value="C:membrane"/>
    <property type="evidence" value="ECO:0007669"/>
    <property type="project" value="UniProtKB-SubCell"/>
</dbReference>
<dbReference type="GO" id="GO:0005634">
    <property type="term" value="C:nucleus"/>
    <property type="evidence" value="ECO:0007669"/>
    <property type="project" value="UniProtKB-SubCell"/>
</dbReference>
<dbReference type="GO" id="GO:0048471">
    <property type="term" value="C:perinuclear region of cytoplasm"/>
    <property type="evidence" value="ECO:0000314"/>
    <property type="project" value="RGD"/>
</dbReference>
<dbReference type="GO" id="GO:0005085">
    <property type="term" value="F:guanyl-nucleotide exchange factor activity"/>
    <property type="evidence" value="ECO:0000250"/>
    <property type="project" value="UniProtKB"/>
</dbReference>
<dbReference type="GO" id="GO:0005078">
    <property type="term" value="F:MAP-kinase scaffold activity"/>
    <property type="evidence" value="ECO:0000315"/>
    <property type="project" value="UniProtKB"/>
</dbReference>
<dbReference type="GO" id="GO:0060090">
    <property type="term" value="F:molecular adaptor activity"/>
    <property type="evidence" value="ECO:0000250"/>
    <property type="project" value="UniProtKB"/>
</dbReference>
<dbReference type="GO" id="GO:0051018">
    <property type="term" value="F:protein kinase A binding"/>
    <property type="evidence" value="ECO:0000266"/>
    <property type="project" value="RGD"/>
</dbReference>
<dbReference type="GO" id="GO:0031267">
    <property type="term" value="F:small GTPase binding"/>
    <property type="evidence" value="ECO:0000266"/>
    <property type="project" value="RGD"/>
</dbReference>
<dbReference type="GO" id="GO:0008270">
    <property type="term" value="F:zinc ion binding"/>
    <property type="evidence" value="ECO:0007669"/>
    <property type="project" value="UniProtKB-KW"/>
</dbReference>
<dbReference type="GO" id="GO:0071875">
    <property type="term" value="P:adrenergic receptor signaling pathway"/>
    <property type="evidence" value="ECO:0000315"/>
    <property type="project" value="UniProtKB"/>
</dbReference>
<dbReference type="GO" id="GO:0060348">
    <property type="term" value="P:bone development"/>
    <property type="evidence" value="ECO:0000250"/>
    <property type="project" value="UniProtKB"/>
</dbReference>
<dbReference type="GO" id="GO:0055007">
    <property type="term" value="P:cardiac muscle cell differentiation"/>
    <property type="evidence" value="ECO:0000250"/>
    <property type="project" value="UniProtKB"/>
</dbReference>
<dbReference type="GO" id="GO:0061049">
    <property type="term" value="P:cell growth involved in cardiac muscle cell development"/>
    <property type="evidence" value="ECO:0000315"/>
    <property type="project" value="RGD"/>
</dbReference>
<dbReference type="GO" id="GO:0007186">
    <property type="term" value="P:G protein-coupled receptor signaling pathway"/>
    <property type="evidence" value="ECO:0000315"/>
    <property type="project" value="UniProtKB"/>
</dbReference>
<dbReference type="GO" id="GO:0007507">
    <property type="term" value="P:heart development"/>
    <property type="evidence" value="ECO:0000250"/>
    <property type="project" value="UniProtKB"/>
</dbReference>
<dbReference type="GO" id="GO:0051168">
    <property type="term" value="P:nuclear export"/>
    <property type="evidence" value="ECO:0000315"/>
    <property type="project" value="RGD"/>
</dbReference>
<dbReference type="GO" id="GO:0043123">
    <property type="term" value="P:positive regulation of canonical NF-kappaB signal transduction"/>
    <property type="evidence" value="ECO:0000315"/>
    <property type="project" value="UniProtKB"/>
</dbReference>
<dbReference type="GO" id="GO:0043406">
    <property type="term" value="P:positive regulation of MAP kinase activity"/>
    <property type="evidence" value="ECO:0000315"/>
    <property type="project" value="UniProtKB"/>
</dbReference>
<dbReference type="GO" id="GO:0035025">
    <property type="term" value="P:positive regulation of Rho protein signal transduction"/>
    <property type="evidence" value="ECO:0000250"/>
    <property type="project" value="UniProtKB"/>
</dbReference>
<dbReference type="GO" id="GO:0035023">
    <property type="term" value="P:regulation of Rho protein signal transduction"/>
    <property type="evidence" value="ECO:0000318"/>
    <property type="project" value="GO_Central"/>
</dbReference>
<dbReference type="GO" id="GO:0060297">
    <property type="term" value="P:regulation of sarcomere organization"/>
    <property type="evidence" value="ECO:0000250"/>
    <property type="project" value="UniProtKB"/>
</dbReference>
<dbReference type="CDD" id="cd20878">
    <property type="entry name" value="C1_AKAP13"/>
    <property type="match status" value="1"/>
</dbReference>
<dbReference type="CDD" id="cd00160">
    <property type="entry name" value="RhoGEF"/>
    <property type="match status" value="1"/>
</dbReference>
<dbReference type="FunFam" id="1.20.900.10:FF:000004">
    <property type="entry name" value="Rho guanine nucleotide exchange factor 2"/>
    <property type="match status" value="1"/>
</dbReference>
<dbReference type="Gene3D" id="3.30.60.20">
    <property type="match status" value="1"/>
</dbReference>
<dbReference type="Gene3D" id="1.20.900.10">
    <property type="entry name" value="Dbl homology (DH) domain"/>
    <property type="match status" value="1"/>
</dbReference>
<dbReference type="Gene3D" id="2.30.29.30">
    <property type="entry name" value="Pleckstrin-homology domain (PH domain)/Phosphotyrosine-binding domain (PTB)"/>
    <property type="match status" value="1"/>
</dbReference>
<dbReference type="InterPro" id="IPR046349">
    <property type="entry name" value="C1-like_sf"/>
</dbReference>
<dbReference type="InterPro" id="IPR035899">
    <property type="entry name" value="DBL_dom_sf"/>
</dbReference>
<dbReference type="InterPro" id="IPR000219">
    <property type="entry name" value="DH_dom"/>
</dbReference>
<dbReference type="InterPro" id="IPR002219">
    <property type="entry name" value="PE/DAG-bd"/>
</dbReference>
<dbReference type="InterPro" id="IPR011993">
    <property type="entry name" value="PH-like_dom_sf"/>
</dbReference>
<dbReference type="InterPro" id="IPR041020">
    <property type="entry name" value="PH_16"/>
</dbReference>
<dbReference type="InterPro" id="IPR001849">
    <property type="entry name" value="PH_domain"/>
</dbReference>
<dbReference type="InterPro" id="IPR051632">
    <property type="entry name" value="Rho_GEF"/>
</dbReference>
<dbReference type="PANTHER" id="PTHR13944:SF18">
    <property type="entry name" value="A-KINASE ANCHOR PROTEIN 13"/>
    <property type="match status" value="1"/>
</dbReference>
<dbReference type="PANTHER" id="PTHR13944">
    <property type="entry name" value="AGAP007712-PA"/>
    <property type="match status" value="1"/>
</dbReference>
<dbReference type="Pfam" id="PF17838">
    <property type="entry name" value="PH_16"/>
    <property type="match status" value="1"/>
</dbReference>
<dbReference type="Pfam" id="PF00621">
    <property type="entry name" value="RhoGEF"/>
    <property type="match status" value="1"/>
</dbReference>
<dbReference type="SMART" id="SM00109">
    <property type="entry name" value="C1"/>
    <property type="match status" value="1"/>
</dbReference>
<dbReference type="SMART" id="SM00233">
    <property type="entry name" value="PH"/>
    <property type="match status" value="1"/>
</dbReference>
<dbReference type="SMART" id="SM00325">
    <property type="entry name" value="RhoGEF"/>
    <property type="match status" value="1"/>
</dbReference>
<dbReference type="SUPFAM" id="SSF57889">
    <property type="entry name" value="Cysteine-rich domain"/>
    <property type="match status" value="1"/>
</dbReference>
<dbReference type="SUPFAM" id="SSF48065">
    <property type="entry name" value="DBL homology domain (DH-domain)"/>
    <property type="match status" value="1"/>
</dbReference>
<dbReference type="SUPFAM" id="SSF50729">
    <property type="entry name" value="PH domain-like"/>
    <property type="match status" value="1"/>
</dbReference>
<dbReference type="PROSITE" id="PS50010">
    <property type="entry name" value="DH_2"/>
    <property type="match status" value="1"/>
</dbReference>
<dbReference type="PROSITE" id="PS50003">
    <property type="entry name" value="PH_DOMAIN"/>
    <property type="match status" value="1"/>
</dbReference>
<dbReference type="PROSITE" id="PS00479">
    <property type="entry name" value="ZF_DAG_PE_1"/>
    <property type="match status" value="1"/>
</dbReference>
<dbReference type="PROSITE" id="PS50081">
    <property type="entry name" value="ZF_DAG_PE_2"/>
    <property type="match status" value="1"/>
</dbReference>
<evidence type="ECO:0000250" key="1">
    <source>
        <dbReference type="UniProtKB" id="E9Q394"/>
    </source>
</evidence>
<evidence type="ECO:0000250" key="2">
    <source>
        <dbReference type="UniProtKB" id="Q12802"/>
    </source>
</evidence>
<evidence type="ECO:0000255" key="3"/>
<evidence type="ECO:0000255" key="4">
    <source>
        <dbReference type="PROSITE-ProRule" id="PRU00062"/>
    </source>
</evidence>
<evidence type="ECO:0000255" key="5">
    <source>
        <dbReference type="PROSITE-ProRule" id="PRU00145"/>
    </source>
</evidence>
<evidence type="ECO:0000255" key="6">
    <source>
        <dbReference type="PROSITE-ProRule" id="PRU00226"/>
    </source>
</evidence>
<evidence type="ECO:0000256" key="7">
    <source>
        <dbReference type="SAM" id="MobiDB-lite"/>
    </source>
</evidence>
<evidence type="ECO:0000269" key="8">
    <source>
    </source>
</evidence>
<evidence type="ECO:0000269" key="9">
    <source>
    </source>
</evidence>
<evidence type="ECO:0000269" key="10">
    <source>
    </source>
</evidence>
<evidence type="ECO:0000269" key="11">
    <source>
    </source>
</evidence>
<evidence type="ECO:0000269" key="12">
    <source>
    </source>
</evidence>
<evidence type="ECO:0000269" key="13">
    <source>
    </source>
</evidence>
<evidence type="ECO:0000303" key="14">
    <source>
    </source>
</evidence>
<evidence type="ECO:0000303" key="15">
    <source>
    </source>
</evidence>
<evidence type="ECO:0000305" key="16"/>
<evidence type="ECO:0000312" key="17">
    <source>
        <dbReference type="EMBL" id="AAL40924.1"/>
    </source>
</evidence>
<evidence type="ECO:0000312" key="18">
    <source>
        <dbReference type="Proteomes" id="UP000002494"/>
    </source>
</evidence>
<evidence type="ECO:0000312" key="19">
    <source>
        <dbReference type="RGD" id="727893"/>
    </source>
</evidence>
<evidence type="ECO:0007744" key="20">
    <source>
    </source>
</evidence>
<gene>
    <name evidence="19" type="primary">Akap13</name>
    <name evidence="14" type="synonym">Rt13</name>
</gene>
<accession>F1M3G7</accession>
<accession>Q8VHU6</accession>
<name>AKP13_RAT</name>
<keyword id="KW-0175">Coiled coil</keyword>
<keyword id="KW-0963">Cytoplasm</keyword>
<keyword id="KW-0344">Guanine-nucleotide releasing factor</keyword>
<keyword id="KW-0472">Membrane</keyword>
<keyword id="KW-0479">Metal-binding</keyword>
<keyword id="KW-0488">Methylation</keyword>
<keyword id="KW-0539">Nucleus</keyword>
<keyword id="KW-0597">Phosphoprotein</keyword>
<keyword id="KW-1185">Reference proteome</keyword>
<keyword id="KW-0862">Zinc</keyword>
<keyword id="KW-0863">Zinc-finger</keyword>
<proteinExistence type="evidence at protein level"/>
<protein>
    <recommendedName>
        <fullName>A-kinase anchor protein 13</fullName>
        <shortName>AKAP-13</shortName>
    </recommendedName>
    <alternativeName>
        <fullName evidence="15">AKAP-Lbc</fullName>
    </alternativeName>
</protein>